<sequence>MELRSELPSVPGAATAAATATGPPVASVASVAAAAAAAASLPVSVAGGLLRAPPLLLRAAEKYPRTPKCARCRNHGVVSALKGHKRYCRWKDCLCAKCTLIAERQRVMAAQVALRRQQAQEENEARELQLLYGTAEGLALAAANGIIPPRPAYEVFGSVCAADGGGPGAGAPAGTGGGAAGAGSSEAKLQKFDLFPKTLLQAGRPGSPQPQPGKPLSPDGADSGPGTSSPEVRPGSGSENGDGESFSGSPLARASKEAGGSCPGSAGPGGGGEEDSPGSASPLGSESGSEADKEEAEASPAPGLGGGPGPRQRTPLDILTRVFPGHRRGVLELVLQGCGGDVVQAIEQVLNHHRGGLAAGLGPTVPPDKAAVGAVGAADDAWPGRVDAAAAGGPGLPAPLQAGPAAPPHHRPLLAGAMAPGALGSLSSRSAFSPLQPNASHFGADAGAYPLGAPLGLSPLRLAYSAAAAHSRGLAFMAPYSTAGLVPTLGFRPPMDYAFSDLMRDRSAAAAAVHKEPTYGGGLYGPMVNGAPEKQ</sequence>
<dbReference type="EMBL" id="BC149711">
    <property type="protein sequence ID" value="AAI49712.1"/>
    <property type="molecule type" value="mRNA"/>
</dbReference>
<dbReference type="RefSeq" id="NP_001096751.1">
    <property type="nucleotide sequence ID" value="NM_001103281.3"/>
</dbReference>
<dbReference type="SMR" id="A6QQ94"/>
<dbReference type="FunCoup" id="A6QQ94">
    <property type="interactions" value="153"/>
</dbReference>
<dbReference type="STRING" id="9913.ENSBTAP00000013742"/>
<dbReference type="PaxDb" id="9913-ENSBTAP00000013742"/>
<dbReference type="GeneID" id="537680"/>
<dbReference type="KEGG" id="bta:537680"/>
<dbReference type="CTD" id="63950"/>
<dbReference type="eggNOG" id="KOG3815">
    <property type="taxonomic scope" value="Eukaryota"/>
</dbReference>
<dbReference type="HOGENOM" id="CLU_038477_2_0_1"/>
<dbReference type="InParanoid" id="A6QQ94"/>
<dbReference type="OrthoDB" id="9942608at2759"/>
<dbReference type="TreeFam" id="TF317837"/>
<dbReference type="Proteomes" id="UP000009136">
    <property type="component" value="Unplaced"/>
</dbReference>
<dbReference type="GO" id="GO:0005634">
    <property type="term" value="C:nucleus"/>
    <property type="evidence" value="ECO:0000318"/>
    <property type="project" value="GO_Central"/>
</dbReference>
<dbReference type="GO" id="GO:0000981">
    <property type="term" value="F:DNA-binding transcription factor activity, RNA polymerase II-specific"/>
    <property type="evidence" value="ECO:0000318"/>
    <property type="project" value="GO_Central"/>
</dbReference>
<dbReference type="GO" id="GO:0046872">
    <property type="term" value="F:metal ion binding"/>
    <property type="evidence" value="ECO:0007669"/>
    <property type="project" value="UniProtKB-KW"/>
</dbReference>
<dbReference type="GO" id="GO:0000978">
    <property type="term" value="F:RNA polymerase II cis-regulatory region sequence-specific DNA binding"/>
    <property type="evidence" value="ECO:0000318"/>
    <property type="project" value="GO_Central"/>
</dbReference>
<dbReference type="GO" id="GO:0006357">
    <property type="term" value="P:regulation of transcription by RNA polymerase II"/>
    <property type="evidence" value="ECO:0000318"/>
    <property type="project" value="GO_Central"/>
</dbReference>
<dbReference type="GO" id="GO:0007548">
    <property type="term" value="P:sex differentiation"/>
    <property type="evidence" value="ECO:0000318"/>
    <property type="project" value="GO_Central"/>
</dbReference>
<dbReference type="CDD" id="cd14418">
    <property type="entry name" value="CUE_DMA_DMRTA2"/>
    <property type="match status" value="1"/>
</dbReference>
<dbReference type="FunFam" id="4.10.1040.10:FF:000001">
    <property type="entry name" value="doublesex- and mab-3-related transcription factor 1"/>
    <property type="match status" value="1"/>
</dbReference>
<dbReference type="Gene3D" id="4.10.1040.10">
    <property type="entry name" value="DM DNA-binding domain"/>
    <property type="match status" value="1"/>
</dbReference>
<dbReference type="InterPro" id="IPR001275">
    <property type="entry name" value="DM_DNA-bd"/>
</dbReference>
<dbReference type="InterPro" id="IPR036407">
    <property type="entry name" value="DM_DNA-bd_sf"/>
</dbReference>
<dbReference type="InterPro" id="IPR005173">
    <property type="entry name" value="DMA"/>
</dbReference>
<dbReference type="InterPro" id="IPR026607">
    <property type="entry name" value="DMRT"/>
</dbReference>
<dbReference type="InterPro" id="IPR046472">
    <property type="entry name" value="DMRT5_1_DMB_dom"/>
</dbReference>
<dbReference type="InterPro" id="IPR009060">
    <property type="entry name" value="UBA-like_sf"/>
</dbReference>
<dbReference type="PANTHER" id="PTHR12322">
    <property type="entry name" value="DOUBLESEX AND MAB-3 RELATED TRANSCRIPTION FACTOR DMRT"/>
    <property type="match status" value="1"/>
</dbReference>
<dbReference type="PANTHER" id="PTHR12322:SF76">
    <property type="entry name" value="DOUBLESEX- AND MAB-3-RELATED TRANSCRIPTION FACTOR A2"/>
    <property type="match status" value="1"/>
</dbReference>
<dbReference type="Pfam" id="PF00751">
    <property type="entry name" value="DM"/>
    <property type="match status" value="1"/>
</dbReference>
<dbReference type="Pfam" id="PF03474">
    <property type="entry name" value="DMA"/>
    <property type="match status" value="1"/>
</dbReference>
<dbReference type="Pfam" id="PF20624">
    <property type="entry name" value="DMRT5_DMB"/>
    <property type="match status" value="1"/>
</dbReference>
<dbReference type="SMART" id="SM00301">
    <property type="entry name" value="DM"/>
    <property type="match status" value="1"/>
</dbReference>
<dbReference type="SUPFAM" id="SSF82927">
    <property type="entry name" value="Cysteine-rich DNA binding domain, (DM domain)"/>
    <property type="match status" value="1"/>
</dbReference>
<dbReference type="SUPFAM" id="SSF46934">
    <property type="entry name" value="UBA-like"/>
    <property type="match status" value="1"/>
</dbReference>
<dbReference type="PROSITE" id="PS40000">
    <property type="entry name" value="DM_1"/>
    <property type="match status" value="1"/>
</dbReference>
<dbReference type="PROSITE" id="PS50809">
    <property type="entry name" value="DM_2"/>
    <property type="match status" value="1"/>
</dbReference>
<keyword id="KW-0238">DNA-binding</keyword>
<keyword id="KW-0479">Metal-binding</keyword>
<keyword id="KW-0539">Nucleus</keyword>
<keyword id="KW-1185">Reference proteome</keyword>
<keyword id="KW-0862">Zinc</keyword>
<name>DMTA2_BOVIN</name>
<evidence type="ECO:0000255" key="1"/>
<evidence type="ECO:0000255" key="2">
    <source>
        <dbReference type="PROSITE-ProRule" id="PRU00070"/>
    </source>
</evidence>
<evidence type="ECO:0000256" key="3">
    <source>
        <dbReference type="SAM" id="MobiDB-lite"/>
    </source>
</evidence>
<evidence type="ECO:0000305" key="4"/>
<feature type="chain" id="PRO_0000333771" description="Doublesex- and mab-3-related transcription factor A2">
    <location>
        <begin position="1"/>
        <end position="535"/>
    </location>
</feature>
<feature type="domain" description="DMA" evidence="1">
    <location>
        <begin position="313"/>
        <end position="348"/>
    </location>
</feature>
<feature type="DNA-binding region" description="DM" evidence="2">
    <location>
        <begin position="69"/>
        <end position="116"/>
    </location>
</feature>
<feature type="region of interest" description="Disordered" evidence="3">
    <location>
        <begin position="200"/>
        <end position="315"/>
    </location>
</feature>
<accession>A6QQ94</accession>
<reference key="1">
    <citation type="submission" date="2007-07" db="EMBL/GenBank/DDBJ databases">
        <authorList>
            <consortium name="NIH - Mammalian Gene Collection (MGC) project"/>
        </authorList>
    </citation>
    <scope>NUCLEOTIDE SEQUENCE [LARGE SCALE MRNA]</scope>
    <source>
        <strain>Hereford</strain>
        <tissue>Hypothalamus</tissue>
    </source>
</reference>
<organism>
    <name type="scientific">Bos taurus</name>
    <name type="common">Bovine</name>
    <dbReference type="NCBI Taxonomy" id="9913"/>
    <lineage>
        <taxon>Eukaryota</taxon>
        <taxon>Metazoa</taxon>
        <taxon>Chordata</taxon>
        <taxon>Craniata</taxon>
        <taxon>Vertebrata</taxon>
        <taxon>Euteleostomi</taxon>
        <taxon>Mammalia</taxon>
        <taxon>Eutheria</taxon>
        <taxon>Laurasiatheria</taxon>
        <taxon>Artiodactyla</taxon>
        <taxon>Ruminantia</taxon>
        <taxon>Pecora</taxon>
        <taxon>Bovidae</taxon>
        <taxon>Bovinae</taxon>
        <taxon>Bos</taxon>
    </lineage>
</organism>
<protein>
    <recommendedName>
        <fullName>Doublesex- and mab-3-related transcription factor A2</fullName>
    </recommendedName>
    <alternativeName>
        <fullName>Doublesex- and mab-3-related transcription factor 5</fullName>
    </alternativeName>
</protein>
<gene>
    <name type="primary">DMRTA2</name>
    <name type="synonym">DMRT5</name>
</gene>
<comment type="function">
    <text>May be involved in sexual development.</text>
</comment>
<comment type="subcellular location">
    <subcellularLocation>
        <location evidence="2">Nucleus</location>
    </subcellularLocation>
</comment>
<comment type="similarity">
    <text evidence="4">Belongs to the DMRT family.</text>
</comment>
<proteinExistence type="evidence at transcript level"/>